<organism>
    <name type="scientific">Homo sapiens</name>
    <name type="common">Human</name>
    <dbReference type="NCBI Taxonomy" id="9606"/>
    <lineage>
        <taxon>Eukaryota</taxon>
        <taxon>Metazoa</taxon>
        <taxon>Chordata</taxon>
        <taxon>Craniata</taxon>
        <taxon>Vertebrata</taxon>
        <taxon>Euteleostomi</taxon>
        <taxon>Mammalia</taxon>
        <taxon>Eutheria</taxon>
        <taxon>Euarchontoglires</taxon>
        <taxon>Primates</taxon>
        <taxon>Haplorrhini</taxon>
        <taxon>Catarrhini</taxon>
        <taxon>Hominidae</taxon>
        <taxon>Homo</taxon>
    </lineage>
</organism>
<reference key="1">
    <citation type="journal article" date="1999" name="J. Leukoc. Biol.">
        <title>Co-expression of several human syntaxin genes in neutrophils and differentiating HL-60 cells: variant isoforms and detection of syntaxin 1.</title>
        <authorList>
            <person name="Martin-Martin B."/>
            <person name="Nabokina S.M."/>
            <person name="Lazo P.A."/>
            <person name="Mollinedo F."/>
        </authorList>
    </citation>
    <scope>NUCLEOTIDE SEQUENCE [MRNA] (ISOFORM 1)</scope>
</reference>
<reference key="2">
    <citation type="submission" date="2004-06" db="EMBL/GenBank/DDBJ databases">
        <title>Cloning of human full open reading frames in Gateway(TM) system entry vector (pDONR201).</title>
        <authorList>
            <person name="Halleck A."/>
            <person name="Ebert L."/>
            <person name="Mkoundinya M."/>
            <person name="Schick M."/>
            <person name="Eisenstein S."/>
            <person name="Neubert P."/>
            <person name="Kstrang K."/>
            <person name="Schatten R."/>
            <person name="Shen B."/>
            <person name="Henze S."/>
            <person name="Mar W."/>
            <person name="Korn B."/>
            <person name="Zuo D."/>
            <person name="Hu Y."/>
            <person name="LaBaer J."/>
        </authorList>
    </citation>
    <scope>NUCLEOTIDE SEQUENCE [LARGE SCALE MRNA] (ISOFORM 1)</scope>
</reference>
<reference key="3">
    <citation type="journal article" date="2004" name="Nat. Genet.">
        <title>Complete sequencing and characterization of 21,243 full-length human cDNAs.</title>
        <authorList>
            <person name="Ota T."/>
            <person name="Suzuki Y."/>
            <person name="Nishikawa T."/>
            <person name="Otsuki T."/>
            <person name="Sugiyama T."/>
            <person name="Irie R."/>
            <person name="Wakamatsu A."/>
            <person name="Hayashi K."/>
            <person name="Sato H."/>
            <person name="Nagai K."/>
            <person name="Kimura K."/>
            <person name="Makita H."/>
            <person name="Sekine M."/>
            <person name="Obayashi M."/>
            <person name="Nishi T."/>
            <person name="Shibahara T."/>
            <person name="Tanaka T."/>
            <person name="Ishii S."/>
            <person name="Yamamoto J."/>
            <person name="Saito K."/>
            <person name="Kawai Y."/>
            <person name="Isono Y."/>
            <person name="Nakamura Y."/>
            <person name="Nagahari K."/>
            <person name="Murakami K."/>
            <person name="Yasuda T."/>
            <person name="Iwayanagi T."/>
            <person name="Wagatsuma M."/>
            <person name="Shiratori A."/>
            <person name="Sudo H."/>
            <person name="Hosoiri T."/>
            <person name="Kaku Y."/>
            <person name="Kodaira H."/>
            <person name="Kondo H."/>
            <person name="Sugawara M."/>
            <person name="Takahashi M."/>
            <person name="Kanda K."/>
            <person name="Yokoi T."/>
            <person name="Furuya T."/>
            <person name="Kikkawa E."/>
            <person name="Omura Y."/>
            <person name="Abe K."/>
            <person name="Kamihara K."/>
            <person name="Katsuta N."/>
            <person name="Sato K."/>
            <person name="Tanikawa M."/>
            <person name="Yamazaki M."/>
            <person name="Ninomiya K."/>
            <person name="Ishibashi T."/>
            <person name="Yamashita H."/>
            <person name="Murakawa K."/>
            <person name="Fujimori K."/>
            <person name="Tanai H."/>
            <person name="Kimata M."/>
            <person name="Watanabe M."/>
            <person name="Hiraoka S."/>
            <person name="Chiba Y."/>
            <person name="Ishida S."/>
            <person name="Ono Y."/>
            <person name="Takiguchi S."/>
            <person name="Watanabe S."/>
            <person name="Yosida M."/>
            <person name="Hotuta T."/>
            <person name="Kusano J."/>
            <person name="Kanehori K."/>
            <person name="Takahashi-Fujii A."/>
            <person name="Hara H."/>
            <person name="Tanase T.-O."/>
            <person name="Nomura Y."/>
            <person name="Togiya S."/>
            <person name="Komai F."/>
            <person name="Hara R."/>
            <person name="Takeuchi K."/>
            <person name="Arita M."/>
            <person name="Imose N."/>
            <person name="Musashino K."/>
            <person name="Yuuki H."/>
            <person name="Oshima A."/>
            <person name="Sasaki N."/>
            <person name="Aotsuka S."/>
            <person name="Yoshikawa Y."/>
            <person name="Matsunawa H."/>
            <person name="Ichihara T."/>
            <person name="Shiohata N."/>
            <person name="Sano S."/>
            <person name="Moriya S."/>
            <person name="Momiyama H."/>
            <person name="Satoh N."/>
            <person name="Takami S."/>
            <person name="Terashima Y."/>
            <person name="Suzuki O."/>
            <person name="Nakagawa S."/>
            <person name="Senoh A."/>
            <person name="Mizoguchi H."/>
            <person name="Goto Y."/>
            <person name="Shimizu F."/>
            <person name="Wakebe H."/>
            <person name="Hishigaki H."/>
            <person name="Watanabe T."/>
            <person name="Sugiyama A."/>
            <person name="Takemoto M."/>
            <person name="Kawakami B."/>
            <person name="Yamazaki M."/>
            <person name="Watanabe K."/>
            <person name="Kumagai A."/>
            <person name="Itakura S."/>
            <person name="Fukuzumi Y."/>
            <person name="Fujimori Y."/>
            <person name="Komiyama M."/>
            <person name="Tashiro H."/>
            <person name="Tanigami A."/>
            <person name="Fujiwara T."/>
            <person name="Ono T."/>
            <person name="Yamada K."/>
            <person name="Fujii Y."/>
            <person name="Ozaki K."/>
            <person name="Hirao M."/>
            <person name="Ohmori Y."/>
            <person name="Kawabata A."/>
            <person name="Hikiji T."/>
            <person name="Kobatake N."/>
            <person name="Inagaki H."/>
            <person name="Ikema Y."/>
            <person name="Okamoto S."/>
            <person name="Okitani R."/>
            <person name="Kawakami T."/>
            <person name="Noguchi S."/>
            <person name="Itoh T."/>
            <person name="Shigeta K."/>
            <person name="Senba T."/>
            <person name="Matsumura K."/>
            <person name="Nakajima Y."/>
            <person name="Mizuno T."/>
            <person name="Morinaga M."/>
            <person name="Sasaki M."/>
            <person name="Togashi T."/>
            <person name="Oyama M."/>
            <person name="Hata H."/>
            <person name="Watanabe M."/>
            <person name="Komatsu T."/>
            <person name="Mizushima-Sugano J."/>
            <person name="Satoh T."/>
            <person name="Shirai Y."/>
            <person name="Takahashi Y."/>
            <person name="Nakagawa K."/>
            <person name="Okumura K."/>
            <person name="Nagase T."/>
            <person name="Nomura N."/>
            <person name="Kikuchi H."/>
            <person name="Masuho Y."/>
            <person name="Yamashita R."/>
            <person name="Nakai K."/>
            <person name="Yada T."/>
            <person name="Nakamura Y."/>
            <person name="Ohara O."/>
            <person name="Isogai T."/>
            <person name="Sugano S."/>
        </authorList>
    </citation>
    <scope>NUCLEOTIDE SEQUENCE [LARGE SCALE MRNA] (ISOFORMS 1 AND 2)</scope>
    <source>
        <tissue>Brain</tissue>
    </source>
</reference>
<reference key="4">
    <citation type="journal article" date="2006" name="Nature">
        <title>The DNA sequence and biological annotation of human chromosome 1.</title>
        <authorList>
            <person name="Gregory S.G."/>
            <person name="Barlow K.F."/>
            <person name="McLay K.E."/>
            <person name="Kaul R."/>
            <person name="Swarbreck D."/>
            <person name="Dunham A."/>
            <person name="Scott C.E."/>
            <person name="Howe K.L."/>
            <person name="Woodfine K."/>
            <person name="Spencer C.C.A."/>
            <person name="Jones M.C."/>
            <person name="Gillson C."/>
            <person name="Searle S."/>
            <person name="Zhou Y."/>
            <person name="Kokocinski F."/>
            <person name="McDonald L."/>
            <person name="Evans R."/>
            <person name="Phillips K."/>
            <person name="Atkinson A."/>
            <person name="Cooper R."/>
            <person name="Jones C."/>
            <person name="Hall R.E."/>
            <person name="Andrews T.D."/>
            <person name="Lloyd C."/>
            <person name="Ainscough R."/>
            <person name="Almeida J.P."/>
            <person name="Ambrose K.D."/>
            <person name="Anderson F."/>
            <person name="Andrew R.W."/>
            <person name="Ashwell R.I.S."/>
            <person name="Aubin K."/>
            <person name="Babbage A.K."/>
            <person name="Bagguley C.L."/>
            <person name="Bailey J."/>
            <person name="Beasley H."/>
            <person name="Bethel G."/>
            <person name="Bird C.P."/>
            <person name="Bray-Allen S."/>
            <person name="Brown J.Y."/>
            <person name="Brown A.J."/>
            <person name="Buckley D."/>
            <person name="Burton J."/>
            <person name="Bye J."/>
            <person name="Carder C."/>
            <person name="Chapman J.C."/>
            <person name="Clark S.Y."/>
            <person name="Clarke G."/>
            <person name="Clee C."/>
            <person name="Cobley V."/>
            <person name="Collier R.E."/>
            <person name="Corby N."/>
            <person name="Coville G.J."/>
            <person name="Davies J."/>
            <person name="Deadman R."/>
            <person name="Dunn M."/>
            <person name="Earthrowl M."/>
            <person name="Ellington A.G."/>
            <person name="Errington H."/>
            <person name="Frankish A."/>
            <person name="Frankland J."/>
            <person name="French L."/>
            <person name="Garner P."/>
            <person name="Garnett J."/>
            <person name="Gay L."/>
            <person name="Ghori M.R.J."/>
            <person name="Gibson R."/>
            <person name="Gilby L.M."/>
            <person name="Gillett W."/>
            <person name="Glithero R.J."/>
            <person name="Grafham D.V."/>
            <person name="Griffiths C."/>
            <person name="Griffiths-Jones S."/>
            <person name="Grocock R."/>
            <person name="Hammond S."/>
            <person name="Harrison E.S.I."/>
            <person name="Hart E."/>
            <person name="Haugen E."/>
            <person name="Heath P.D."/>
            <person name="Holmes S."/>
            <person name="Holt K."/>
            <person name="Howden P.J."/>
            <person name="Hunt A.R."/>
            <person name="Hunt S.E."/>
            <person name="Hunter G."/>
            <person name="Isherwood J."/>
            <person name="James R."/>
            <person name="Johnson C."/>
            <person name="Johnson D."/>
            <person name="Joy A."/>
            <person name="Kay M."/>
            <person name="Kershaw J.K."/>
            <person name="Kibukawa M."/>
            <person name="Kimberley A.M."/>
            <person name="King A."/>
            <person name="Knights A.J."/>
            <person name="Lad H."/>
            <person name="Laird G."/>
            <person name="Lawlor S."/>
            <person name="Leongamornlert D.A."/>
            <person name="Lloyd D.M."/>
            <person name="Loveland J."/>
            <person name="Lovell J."/>
            <person name="Lush M.J."/>
            <person name="Lyne R."/>
            <person name="Martin S."/>
            <person name="Mashreghi-Mohammadi M."/>
            <person name="Matthews L."/>
            <person name="Matthews N.S.W."/>
            <person name="McLaren S."/>
            <person name="Milne S."/>
            <person name="Mistry S."/>
            <person name="Moore M.J.F."/>
            <person name="Nickerson T."/>
            <person name="O'Dell C.N."/>
            <person name="Oliver K."/>
            <person name="Palmeiri A."/>
            <person name="Palmer S.A."/>
            <person name="Parker A."/>
            <person name="Patel D."/>
            <person name="Pearce A.V."/>
            <person name="Peck A.I."/>
            <person name="Pelan S."/>
            <person name="Phelps K."/>
            <person name="Phillimore B.J."/>
            <person name="Plumb R."/>
            <person name="Rajan J."/>
            <person name="Raymond C."/>
            <person name="Rouse G."/>
            <person name="Saenphimmachak C."/>
            <person name="Sehra H.K."/>
            <person name="Sheridan E."/>
            <person name="Shownkeen R."/>
            <person name="Sims S."/>
            <person name="Skuce C.D."/>
            <person name="Smith M."/>
            <person name="Steward C."/>
            <person name="Subramanian S."/>
            <person name="Sycamore N."/>
            <person name="Tracey A."/>
            <person name="Tromans A."/>
            <person name="Van Helmond Z."/>
            <person name="Wall M."/>
            <person name="Wallis J.M."/>
            <person name="White S."/>
            <person name="Whitehead S.L."/>
            <person name="Wilkinson J.E."/>
            <person name="Willey D.L."/>
            <person name="Williams H."/>
            <person name="Wilming L."/>
            <person name="Wray P.W."/>
            <person name="Wu Z."/>
            <person name="Coulson A."/>
            <person name="Vaudin M."/>
            <person name="Sulston J.E."/>
            <person name="Durbin R.M."/>
            <person name="Hubbard T."/>
            <person name="Wooster R."/>
            <person name="Dunham I."/>
            <person name="Carter N.P."/>
            <person name="McVean G."/>
            <person name="Ross M.T."/>
            <person name="Harrow J."/>
            <person name="Olson M.V."/>
            <person name="Beck S."/>
            <person name="Rogers J."/>
            <person name="Bentley D.R."/>
        </authorList>
    </citation>
    <scope>NUCLEOTIDE SEQUENCE [LARGE SCALE GENOMIC DNA]</scope>
</reference>
<reference key="5">
    <citation type="submission" date="2005-07" db="EMBL/GenBank/DDBJ databases">
        <authorList>
            <person name="Mural R.J."/>
            <person name="Istrail S."/>
            <person name="Sutton G.G."/>
            <person name="Florea L."/>
            <person name="Halpern A.L."/>
            <person name="Mobarry C.M."/>
            <person name="Lippert R."/>
            <person name="Walenz B."/>
            <person name="Shatkay H."/>
            <person name="Dew I."/>
            <person name="Miller J.R."/>
            <person name="Flanigan M.J."/>
            <person name="Edwards N.J."/>
            <person name="Bolanos R."/>
            <person name="Fasulo D."/>
            <person name="Halldorsson B.V."/>
            <person name="Hannenhalli S."/>
            <person name="Turner R."/>
            <person name="Yooseph S."/>
            <person name="Lu F."/>
            <person name="Nusskern D.R."/>
            <person name="Shue B.C."/>
            <person name="Zheng X.H."/>
            <person name="Zhong F."/>
            <person name="Delcher A.L."/>
            <person name="Huson D.H."/>
            <person name="Kravitz S.A."/>
            <person name="Mouchard L."/>
            <person name="Reinert K."/>
            <person name="Remington K.A."/>
            <person name="Clark A.G."/>
            <person name="Waterman M.S."/>
            <person name="Eichler E.E."/>
            <person name="Adams M.D."/>
            <person name="Hunkapiller M.W."/>
            <person name="Myers E.W."/>
            <person name="Venter J.C."/>
        </authorList>
    </citation>
    <scope>NUCLEOTIDE SEQUENCE [LARGE SCALE GENOMIC DNA]</scope>
</reference>
<reference key="6">
    <citation type="journal article" date="2004" name="Genome Res.">
        <title>The status, quality, and expansion of the NIH full-length cDNA project: the Mammalian Gene Collection (MGC).</title>
        <authorList>
            <consortium name="The MGC Project Team"/>
        </authorList>
    </citation>
    <scope>NUCLEOTIDE SEQUENCE [LARGE SCALE MRNA] (ISOFORM 1)</scope>
    <source>
        <tissue>Muscle</tissue>
    </source>
</reference>
<reference key="7">
    <citation type="journal article" date="2001" name="J. Biol. Chem.">
        <title>Association of a novel PDZ domain-containing peripheral Golgi protein with the Q-SNARE (Q-soluble N-ethylmaleimide-sensitive fusion protein (NSF) attachment protein receptor) protein syntaxin 6.</title>
        <authorList>
            <person name="Charest A."/>
            <person name="Lane K."/>
            <person name="McMahon K."/>
            <person name="Housman D.E."/>
        </authorList>
    </citation>
    <scope>SUBCELLULAR LOCATION</scope>
    <scope>INTERACTION WITH GOPC</scope>
</reference>
<reference key="8">
    <citation type="journal article" date="2009" name="Sci. Signal.">
        <title>Quantitative phosphoproteomic analysis of T cell receptor signaling reveals system-wide modulation of protein-protein interactions.</title>
        <authorList>
            <person name="Mayya V."/>
            <person name="Lundgren D.H."/>
            <person name="Hwang S.-I."/>
            <person name="Rezaul K."/>
            <person name="Wu L."/>
            <person name="Eng J.K."/>
            <person name="Rodionov V."/>
            <person name="Han D.K."/>
        </authorList>
    </citation>
    <scope>PHOSPHORYLATION [LARGE SCALE ANALYSIS] AT SER-152</scope>
    <scope>IDENTIFICATION BY MASS SPECTROMETRY [LARGE SCALE ANALYSIS]</scope>
    <source>
        <tissue>Leukemic T-cell</tissue>
    </source>
</reference>
<reference key="9">
    <citation type="journal article" date="2010" name="Sci. Signal.">
        <title>Quantitative phosphoproteomics reveals widespread full phosphorylation site occupancy during mitosis.</title>
        <authorList>
            <person name="Olsen J.V."/>
            <person name="Vermeulen M."/>
            <person name="Santamaria A."/>
            <person name="Kumar C."/>
            <person name="Miller M.L."/>
            <person name="Jensen L.J."/>
            <person name="Gnad F."/>
            <person name="Cox J."/>
            <person name="Jensen T.S."/>
            <person name="Nigg E.A."/>
            <person name="Brunak S."/>
            <person name="Mann M."/>
        </authorList>
    </citation>
    <scope>ACETYLATION [LARGE SCALE ANALYSIS] AT SER-2</scope>
    <scope>PHOSPHORYLATION [LARGE SCALE ANALYSIS] AT SER-2</scope>
    <scope>CLEAVAGE OF INITIATOR METHIONINE [LARGE SCALE ANALYSIS]</scope>
    <scope>IDENTIFICATION BY MASS SPECTROMETRY [LARGE SCALE ANALYSIS]</scope>
    <source>
        <tissue>Cervix carcinoma</tissue>
    </source>
</reference>
<reference key="10">
    <citation type="journal article" date="2010" name="Traffic">
        <title>A novel syntaxin 6-interacting protein, SHIP164, regulates syntaxin 6-dependent sorting from early endosomes.</title>
        <authorList>
            <person name="Otto G.P."/>
            <person name="Razi M."/>
            <person name="Morvan J."/>
            <person name="Stenner F."/>
            <person name="Tooze S.A."/>
        </authorList>
    </citation>
    <scope>INTERACTION WITH BLTP3B</scope>
</reference>
<reference key="11">
    <citation type="journal article" date="2013" name="J. Proteome Res.">
        <title>Toward a comprehensive characterization of a human cancer cell phosphoproteome.</title>
        <authorList>
            <person name="Zhou H."/>
            <person name="Di Palma S."/>
            <person name="Preisinger C."/>
            <person name="Peng M."/>
            <person name="Polat A.N."/>
            <person name="Heck A.J."/>
            <person name="Mohammed S."/>
        </authorList>
    </citation>
    <scope>PHOSPHORYLATION [LARGE SCALE ANALYSIS] AT SER-2 AND SER-129</scope>
    <scope>IDENTIFICATION BY MASS SPECTROMETRY [LARGE SCALE ANALYSIS]</scope>
    <source>
        <tissue>Cervix carcinoma</tissue>
        <tissue>Erythroleukemia</tissue>
    </source>
</reference>
<reference key="12">
    <citation type="journal article" date="2013" name="PLoS ONE">
        <title>Ubiquitination and degradation of CFTR by the E3 ubiquitin ligase MARCH2 through its association with adaptor proteins CAL and STX6.</title>
        <authorList>
            <person name="Cheng J."/>
            <person name="Guggino W."/>
        </authorList>
    </citation>
    <scope>INTERACTION WITH MARCHF2</scope>
    <scope>SUBCELLULAR LOCATION</scope>
</reference>
<reference key="13">
    <citation type="journal article" date="2015" name="Proteomics">
        <title>N-terminome analysis of the human mitochondrial proteome.</title>
        <authorList>
            <person name="Vaca Jacome A.S."/>
            <person name="Rabilloud T."/>
            <person name="Schaeffer-Reiss C."/>
            <person name="Rompais M."/>
            <person name="Ayoub D."/>
            <person name="Lane L."/>
            <person name="Bairoch A."/>
            <person name="Van Dorsselaer A."/>
            <person name="Carapito C."/>
        </authorList>
    </citation>
    <scope>IDENTIFICATION BY MASS SPECTROMETRY [LARGE SCALE ANALYSIS]</scope>
</reference>
<reference key="14">
    <citation type="journal article" date="2017" name="J. Cell Biol.">
        <title>BAIAP3, a C2 domain-containing Munc13 protein, controls the fate of dense-core vesicles in neuroendocrine cells.</title>
        <authorList>
            <person name="Zhang X."/>
            <person name="Jiang S."/>
            <person name="Mitok K.A."/>
            <person name="Li L."/>
            <person name="Attie A.D."/>
            <person name="Martin T.F.J."/>
        </authorList>
    </citation>
    <scope>INTERACTION WITH BAIAP3</scope>
</reference>
<reference key="15">
    <citation type="journal article" date="2022" name="J. Cell Biol.">
        <title>SHIP164 is a chorein motif lipid transfer protein that controls endosome-Golgi membrane traffic.</title>
        <authorList>
            <person name="Hanna M.G."/>
            <person name="Suen P.H."/>
            <person name="Wu Y."/>
            <person name="Reinisch K.M."/>
            <person name="De Camilli P."/>
        </authorList>
    </citation>
    <scope>INTERACTION WITH BLTP3B</scope>
</reference>
<reference key="16">
    <citation type="journal article" date="2007" name="EMBO J.">
        <title>Early endosomal SNAREs form a structurally conserved SNARE complex and fuse liposomes with multiple topologies.</title>
        <authorList>
            <person name="Zwilling D."/>
            <person name="Cypionka A."/>
            <person name="Pohl W.H."/>
            <person name="Fasshauer D."/>
            <person name="Walla P.J."/>
            <person name="Wahl M.C."/>
            <person name="Jahn R."/>
        </authorList>
    </citation>
    <scope>X-RAY CRYSTALLOGRAPHY (2.50 ANGSTROMS) OF 47-117 IN COMPLEX WITH STX12; VTI1A AND VAMP4</scope>
    <scope>SUBUNIT</scope>
</reference>
<dbReference type="EMBL" id="AJ002078">
    <property type="protein sequence ID" value="CAA05177.1"/>
    <property type="molecule type" value="mRNA"/>
</dbReference>
<dbReference type="EMBL" id="CR541856">
    <property type="protein sequence ID" value="CAG46654.1"/>
    <property type="molecule type" value="mRNA"/>
</dbReference>
<dbReference type="EMBL" id="CR541873">
    <property type="protein sequence ID" value="CAG46671.1"/>
    <property type="molecule type" value="mRNA"/>
</dbReference>
<dbReference type="EMBL" id="AK299063">
    <property type="protein sequence ID" value="BAG61129.1"/>
    <property type="molecule type" value="mRNA"/>
</dbReference>
<dbReference type="EMBL" id="AK312440">
    <property type="protein sequence ID" value="BAG35349.1"/>
    <property type="molecule type" value="mRNA"/>
</dbReference>
<dbReference type="EMBL" id="AL356267">
    <property type="status" value="NOT_ANNOTATED_CDS"/>
    <property type="molecule type" value="Genomic_DNA"/>
</dbReference>
<dbReference type="EMBL" id="AL162431">
    <property type="status" value="NOT_ANNOTATED_CDS"/>
    <property type="molecule type" value="Genomic_DNA"/>
</dbReference>
<dbReference type="EMBL" id="CH471067">
    <property type="protein sequence ID" value="EAW91091.1"/>
    <property type="molecule type" value="Genomic_DNA"/>
</dbReference>
<dbReference type="EMBL" id="BC009944">
    <property type="protein sequence ID" value="AAH09944.1"/>
    <property type="molecule type" value="mRNA"/>
</dbReference>
<dbReference type="CCDS" id="CCDS1341.1">
    <molecule id="O43752-1"/>
</dbReference>
<dbReference type="CCDS" id="CCDS65738.1">
    <molecule id="O43752-2"/>
</dbReference>
<dbReference type="RefSeq" id="NP_001273139.1">
    <molecule id="O43752-2"/>
    <property type="nucleotide sequence ID" value="NM_001286210.2"/>
</dbReference>
<dbReference type="RefSeq" id="NP_005810.1">
    <molecule id="O43752-1"/>
    <property type="nucleotide sequence ID" value="NM_005819.6"/>
</dbReference>
<dbReference type="RefSeq" id="XP_016855496.1">
    <property type="nucleotide sequence ID" value="XM_017000007.1"/>
</dbReference>
<dbReference type="PDB" id="2NPS">
    <property type="method" value="X-ray"/>
    <property type="resolution" value="2.50 A"/>
    <property type="chains" value="D=169-234"/>
</dbReference>
<dbReference type="PDB" id="4J2C">
    <property type="method" value="X-ray"/>
    <property type="resolution" value="1.80 A"/>
    <property type="chains" value="A/C=3-110"/>
</dbReference>
<dbReference type="PDBsum" id="2NPS"/>
<dbReference type="PDBsum" id="4J2C"/>
<dbReference type="SMR" id="O43752"/>
<dbReference type="BioGRID" id="115522">
    <property type="interactions" value="456"/>
</dbReference>
<dbReference type="CORUM" id="O43752"/>
<dbReference type="DIP" id="DIP-44224N"/>
<dbReference type="FunCoup" id="O43752">
    <property type="interactions" value="2740"/>
</dbReference>
<dbReference type="IntAct" id="O43752">
    <property type="interactions" value="128"/>
</dbReference>
<dbReference type="MINT" id="O43752"/>
<dbReference type="STRING" id="9606.ENSP00000258301"/>
<dbReference type="TCDB" id="1.F.1.1.5">
    <property type="family name" value="the synaptosomal vesicle fusion pore (svf-pore) family"/>
</dbReference>
<dbReference type="GlyGen" id="O43752">
    <property type="glycosylation" value="1 site, 1 O-linked glycan (1 site)"/>
</dbReference>
<dbReference type="iPTMnet" id="O43752"/>
<dbReference type="PhosphoSitePlus" id="O43752"/>
<dbReference type="SwissPalm" id="O43752"/>
<dbReference type="BioMuta" id="STX6"/>
<dbReference type="jPOST" id="O43752"/>
<dbReference type="MassIVE" id="O43752"/>
<dbReference type="PaxDb" id="9606-ENSP00000258301"/>
<dbReference type="PeptideAtlas" id="O43752"/>
<dbReference type="ProteomicsDB" id="49149">
    <molecule id="O43752-1"/>
</dbReference>
<dbReference type="ProteomicsDB" id="4918"/>
<dbReference type="Pumba" id="O43752"/>
<dbReference type="Antibodypedia" id="34430">
    <property type="antibodies" value="308 antibodies from 37 providers"/>
</dbReference>
<dbReference type="DNASU" id="10228"/>
<dbReference type="Ensembl" id="ENST00000258301.6">
    <molecule id="O43752-1"/>
    <property type="protein sequence ID" value="ENSP00000258301.5"/>
    <property type="gene ID" value="ENSG00000135823.14"/>
</dbReference>
<dbReference type="Ensembl" id="ENST00000542060.5">
    <molecule id="O43752-2"/>
    <property type="protein sequence ID" value="ENSP00000440188.1"/>
    <property type="gene ID" value="ENSG00000135823.14"/>
</dbReference>
<dbReference type="GeneID" id="10228"/>
<dbReference type="KEGG" id="hsa:10228"/>
<dbReference type="MANE-Select" id="ENST00000258301.6">
    <property type="protein sequence ID" value="ENSP00000258301.5"/>
    <property type="RefSeq nucleotide sequence ID" value="NM_005819.6"/>
    <property type="RefSeq protein sequence ID" value="NP_005810.1"/>
</dbReference>
<dbReference type="UCSC" id="uc010pnr.4">
    <molecule id="O43752-1"/>
    <property type="organism name" value="human"/>
</dbReference>
<dbReference type="AGR" id="HGNC:11441"/>
<dbReference type="CTD" id="10228"/>
<dbReference type="DisGeNET" id="10228"/>
<dbReference type="GeneCards" id="STX6"/>
<dbReference type="HGNC" id="HGNC:11441">
    <property type="gene designation" value="STX6"/>
</dbReference>
<dbReference type="HPA" id="ENSG00000135823">
    <property type="expression patterns" value="Low tissue specificity"/>
</dbReference>
<dbReference type="MIM" id="603944">
    <property type="type" value="gene"/>
</dbReference>
<dbReference type="neXtProt" id="NX_O43752"/>
<dbReference type="OpenTargets" id="ENSG00000135823"/>
<dbReference type="PharmGKB" id="PA36238"/>
<dbReference type="VEuPathDB" id="HostDB:ENSG00000135823"/>
<dbReference type="eggNOG" id="KOG3202">
    <property type="taxonomic scope" value="Eukaryota"/>
</dbReference>
<dbReference type="GeneTree" id="ENSGT00940000157639"/>
<dbReference type="HOGENOM" id="CLU_061883_2_1_1"/>
<dbReference type="InParanoid" id="O43752"/>
<dbReference type="OMA" id="EHDPYRF"/>
<dbReference type="OrthoDB" id="546861at2759"/>
<dbReference type="PAN-GO" id="O43752">
    <property type="GO annotations" value="9 GO annotations based on evolutionary models"/>
</dbReference>
<dbReference type="PhylomeDB" id="O43752"/>
<dbReference type="TreeFam" id="TF313254"/>
<dbReference type="PathwayCommons" id="O43752"/>
<dbReference type="Reactome" id="R-HSA-6811438">
    <property type="pathway name" value="Intra-Golgi traffic"/>
</dbReference>
<dbReference type="Reactome" id="R-HSA-6811440">
    <property type="pathway name" value="Retrograde transport at the Trans-Golgi-Network"/>
</dbReference>
<dbReference type="SignaLink" id="O43752"/>
<dbReference type="BioGRID-ORCS" id="10228">
    <property type="hits" value="14 hits in 1155 CRISPR screens"/>
</dbReference>
<dbReference type="ChiTaRS" id="STX6">
    <property type="organism name" value="human"/>
</dbReference>
<dbReference type="EvolutionaryTrace" id="O43752"/>
<dbReference type="GeneWiki" id="STX6"/>
<dbReference type="GenomeRNAi" id="10228"/>
<dbReference type="Pharos" id="O43752">
    <property type="development level" value="Tbio"/>
</dbReference>
<dbReference type="PRO" id="PR:O43752"/>
<dbReference type="Proteomes" id="UP000005640">
    <property type="component" value="Chromosome 1"/>
</dbReference>
<dbReference type="RNAct" id="O43752">
    <property type="molecule type" value="protein"/>
</dbReference>
<dbReference type="Bgee" id="ENSG00000135823">
    <property type="expression patterns" value="Expressed in secondary oocyte and 191 other cell types or tissues"/>
</dbReference>
<dbReference type="GO" id="GO:0030136">
    <property type="term" value="C:clathrin-coated vesicle"/>
    <property type="evidence" value="ECO:0000304"/>
    <property type="project" value="UniProtKB"/>
</dbReference>
<dbReference type="GO" id="GO:0005829">
    <property type="term" value="C:cytosol"/>
    <property type="evidence" value="ECO:0000314"/>
    <property type="project" value="HPA"/>
</dbReference>
<dbReference type="GO" id="GO:0005769">
    <property type="term" value="C:early endosome"/>
    <property type="evidence" value="ECO:0000314"/>
    <property type="project" value="UniProtKB"/>
</dbReference>
<dbReference type="GO" id="GO:0012505">
    <property type="term" value="C:endomembrane system"/>
    <property type="evidence" value="ECO:0000318"/>
    <property type="project" value="GO_Central"/>
</dbReference>
<dbReference type="GO" id="GO:0005794">
    <property type="term" value="C:Golgi apparatus"/>
    <property type="evidence" value="ECO:0000314"/>
    <property type="project" value="HPA"/>
</dbReference>
<dbReference type="GO" id="GO:0000139">
    <property type="term" value="C:Golgi membrane"/>
    <property type="evidence" value="ECO:0000304"/>
    <property type="project" value="Reactome"/>
</dbReference>
<dbReference type="GO" id="GO:0005654">
    <property type="term" value="C:nucleoplasm"/>
    <property type="evidence" value="ECO:0000314"/>
    <property type="project" value="HPA"/>
</dbReference>
<dbReference type="GO" id="GO:0048471">
    <property type="term" value="C:perinuclear region of cytoplasm"/>
    <property type="evidence" value="ECO:0000314"/>
    <property type="project" value="UniProtKB"/>
</dbReference>
<dbReference type="GO" id="GO:0045335">
    <property type="term" value="C:phagocytic vesicle"/>
    <property type="evidence" value="ECO:0007669"/>
    <property type="project" value="Ensembl"/>
</dbReference>
<dbReference type="GO" id="GO:0005886">
    <property type="term" value="C:plasma membrane"/>
    <property type="evidence" value="ECO:0000304"/>
    <property type="project" value="UniProtKB"/>
</dbReference>
<dbReference type="GO" id="GO:0055037">
    <property type="term" value="C:recycling endosome"/>
    <property type="evidence" value="ECO:0000250"/>
    <property type="project" value="UniProtKB"/>
</dbReference>
<dbReference type="GO" id="GO:0055038">
    <property type="term" value="C:recycling endosome membrane"/>
    <property type="evidence" value="ECO:0007669"/>
    <property type="project" value="UniProtKB-SubCell"/>
</dbReference>
<dbReference type="GO" id="GO:0031201">
    <property type="term" value="C:SNARE complex"/>
    <property type="evidence" value="ECO:0000314"/>
    <property type="project" value="MGI"/>
</dbReference>
<dbReference type="GO" id="GO:0030672">
    <property type="term" value="C:synaptic vesicle membrane"/>
    <property type="evidence" value="ECO:0000318"/>
    <property type="project" value="GO_Central"/>
</dbReference>
<dbReference type="GO" id="GO:0005802">
    <property type="term" value="C:trans-Golgi network"/>
    <property type="evidence" value="ECO:0000314"/>
    <property type="project" value="UniProtKB"/>
</dbReference>
<dbReference type="GO" id="GO:0032588">
    <property type="term" value="C:trans-Golgi network membrane"/>
    <property type="evidence" value="ECO:0000250"/>
    <property type="project" value="BHF-UCL"/>
</dbReference>
<dbReference type="GO" id="GO:0005484">
    <property type="term" value="F:SNAP receptor activity"/>
    <property type="evidence" value="ECO:0000318"/>
    <property type="project" value="GO_Central"/>
</dbReference>
<dbReference type="GO" id="GO:0000149">
    <property type="term" value="F:SNARE binding"/>
    <property type="evidence" value="ECO:0000318"/>
    <property type="project" value="GO_Central"/>
</dbReference>
<dbReference type="GO" id="GO:0019905">
    <property type="term" value="F:syntaxin binding"/>
    <property type="evidence" value="ECO:0000353"/>
    <property type="project" value="UniProtKB"/>
</dbReference>
<dbReference type="GO" id="GO:0032456">
    <property type="term" value="P:endocytic recycling"/>
    <property type="evidence" value="ECO:0000315"/>
    <property type="project" value="UniProtKB"/>
</dbReference>
<dbReference type="GO" id="GO:0048193">
    <property type="term" value="P:Golgi vesicle transport"/>
    <property type="evidence" value="ECO:0007669"/>
    <property type="project" value="InterPro"/>
</dbReference>
<dbReference type="GO" id="GO:0006886">
    <property type="term" value="P:intracellular protein transport"/>
    <property type="evidence" value="ECO:0000318"/>
    <property type="project" value="GO_Central"/>
</dbReference>
<dbReference type="GO" id="GO:0032880">
    <property type="term" value="P:regulation of protein localization"/>
    <property type="evidence" value="ECO:0000315"/>
    <property type="project" value="UniProtKB"/>
</dbReference>
<dbReference type="GO" id="GO:0042147">
    <property type="term" value="P:retrograde transport, endosome to Golgi"/>
    <property type="evidence" value="ECO:0000315"/>
    <property type="project" value="UniProtKB"/>
</dbReference>
<dbReference type="GO" id="GO:0016189">
    <property type="term" value="P:synaptic vesicle to endosome fusion"/>
    <property type="evidence" value="ECO:0007669"/>
    <property type="project" value="Ensembl"/>
</dbReference>
<dbReference type="GO" id="GO:0048278">
    <property type="term" value="P:vesicle docking"/>
    <property type="evidence" value="ECO:0000318"/>
    <property type="project" value="GO_Central"/>
</dbReference>
<dbReference type="GO" id="GO:0006906">
    <property type="term" value="P:vesicle fusion"/>
    <property type="evidence" value="ECO:0000353"/>
    <property type="project" value="UniProtKB"/>
</dbReference>
<dbReference type="CDD" id="cd21447">
    <property type="entry name" value="SNARE_NTD_STX6"/>
    <property type="match status" value="1"/>
</dbReference>
<dbReference type="CDD" id="cd15851">
    <property type="entry name" value="SNARE_Syntaxin6"/>
    <property type="match status" value="1"/>
</dbReference>
<dbReference type="FunFam" id="1.20.5.110:FF:000006">
    <property type="entry name" value="Syntaxin 6"/>
    <property type="match status" value="1"/>
</dbReference>
<dbReference type="FunFam" id="1.20.58.90:FF:000002">
    <property type="entry name" value="syntaxin-6 isoform X1"/>
    <property type="match status" value="1"/>
</dbReference>
<dbReference type="Gene3D" id="1.20.5.110">
    <property type="match status" value="1"/>
</dbReference>
<dbReference type="Gene3D" id="1.20.58.90">
    <property type="match status" value="1"/>
</dbReference>
<dbReference type="InterPro" id="IPR010989">
    <property type="entry name" value="SNARE"/>
</dbReference>
<dbReference type="InterPro" id="IPR015260">
    <property type="entry name" value="Syntaxin-6/10/61_N"/>
</dbReference>
<dbReference type="InterPro" id="IPR006012">
    <property type="entry name" value="Syntaxin/epimorphin_CS"/>
</dbReference>
<dbReference type="InterPro" id="IPR000727">
    <property type="entry name" value="T_SNARE_dom"/>
</dbReference>
<dbReference type="PANTHER" id="PTHR12791">
    <property type="entry name" value="GOLGI SNARE BET1-RELATED"/>
    <property type="match status" value="1"/>
</dbReference>
<dbReference type="Pfam" id="PF05739">
    <property type="entry name" value="SNARE"/>
    <property type="match status" value="1"/>
</dbReference>
<dbReference type="Pfam" id="PF09177">
    <property type="entry name" value="STX6_10_61_N"/>
    <property type="match status" value="1"/>
</dbReference>
<dbReference type="SMART" id="SM00397">
    <property type="entry name" value="t_SNARE"/>
    <property type="match status" value="1"/>
</dbReference>
<dbReference type="SUPFAM" id="SSF58038">
    <property type="entry name" value="SNARE fusion complex"/>
    <property type="match status" value="1"/>
</dbReference>
<dbReference type="SUPFAM" id="SSF47661">
    <property type="entry name" value="t-snare proteins"/>
    <property type="match status" value="1"/>
</dbReference>
<dbReference type="PROSITE" id="PS00914">
    <property type="entry name" value="SYNTAXIN"/>
    <property type="match status" value="1"/>
</dbReference>
<dbReference type="PROSITE" id="PS50192">
    <property type="entry name" value="T_SNARE"/>
    <property type="match status" value="1"/>
</dbReference>
<gene>
    <name type="primary">STX6</name>
</gene>
<proteinExistence type="evidence at protein level"/>
<name>STX6_HUMAN</name>
<feature type="initiator methionine" description="Removed" evidence="14">
    <location>
        <position position="1"/>
    </location>
</feature>
<feature type="chain" id="PRO_0000210208" description="Syntaxin-6">
    <location>
        <begin position="2"/>
        <end position="255"/>
    </location>
</feature>
<feature type="topological domain" description="Cytoplasmic" evidence="3">
    <location>
        <begin position="2"/>
        <end position="234"/>
    </location>
</feature>
<feature type="transmembrane region" description="Helical; Anchor for type IV membrane protein" evidence="3">
    <location>
        <begin position="235"/>
        <end position="255"/>
    </location>
</feature>
<feature type="domain" description="t-SNARE coiled-coil homology" evidence="4">
    <location>
        <begin position="163"/>
        <end position="225"/>
    </location>
</feature>
<feature type="region of interest" description="Required for interaction with VPS51" evidence="1">
    <location>
        <begin position="2"/>
        <end position="168"/>
    </location>
</feature>
<feature type="coiled-coil region" evidence="3">
    <location>
        <begin position="41"/>
        <end position="74"/>
    </location>
</feature>
<feature type="modified residue" description="N-acetylserine" evidence="14">
    <location>
        <position position="2"/>
    </location>
</feature>
<feature type="modified residue" description="Phosphoserine" evidence="14 15">
    <location>
        <position position="2"/>
    </location>
</feature>
<feature type="modified residue" description="Phosphoserine" evidence="15">
    <location>
        <position position="129"/>
    </location>
</feature>
<feature type="modified residue" description="Phosphoserine" evidence="13">
    <location>
        <position position="152"/>
    </location>
</feature>
<feature type="splice variant" id="VSP_054763" description="In isoform 2." evidence="11">
    <location>
        <begin position="1"/>
        <end position="101"/>
    </location>
</feature>
<feature type="sequence conflict" description="In Ref. 2; CAG46654." evidence="12" ref="2">
    <original>K</original>
    <variation>R</variation>
    <location>
        <position position="77"/>
    </location>
</feature>
<feature type="helix" evidence="17">
    <location>
        <begin position="7"/>
        <end position="33"/>
    </location>
</feature>
<feature type="turn" evidence="17">
    <location>
        <begin position="35"/>
        <end position="37"/>
    </location>
</feature>
<feature type="helix" evidence="17">
    <location>
        <begin position="40"/>
        <end position="73"/>
    </location>
</feature>
<feature type="helix" evidence="17">
    <location>
        <begin position="75"/>
        <end position="78"/>
    </location>
</feature>
<feature type="helix" evidence="17">
    <location>
        <begin position="82"/>
        <end position="107"/>
    </location>
</feature>
<feature type="helix" evidence="16">
    <location>
        <begin position="173"/>
        <end position="229"/>
    </location>
</feature>
<evidence type="ECO:0000250" key="1">
    <source>
        <dbReference type="UniProtKB" id="Q63635"/>
    </source>
</evidence>
<evidence type="ECO:0000250" key="2">
    <source>
        <dbReference type="UniProtKB" id="Q9JKK1"/>
    </source>
</evidence>
<evidence type="ECO:0000255" key="3"/>
<evidence type="ECO:0000255" key="4">
    <source>
        <dbReference type="PROSITE-ProRule" id="PRU00202"/>
    </source>
</evidence>
<evidence type="ECO:0000269" key="5">
    <source>
    </source>
</evidence>
<evidence type="ECO:0000269" key="6">
    <source>
    </source>
</evidence>
<evidence type="ECO:0000269" key="7">
    <source>
    </source>
</evidence>
<evidence type="ECO:0000269" key="8">
    <source>
    </source>
</evidence>
<evidence type="ECO:0000269" key="9">
    <source>
    </source>
</evidence>
<evidence type="ECO:0000269" key="10">
    <source>
    </source>
</evidence>
<evidence type="ECO:0000303" key="11">
    <source>
    </source>
</evidence>
<evidence type="ECO:0000305" key="12"/>
<evidence type="ECO:0007744" key="13">
    <source>
    </source>
</evidence>
<evidence type="ECO:0007744" key="14">
    <source>
    </source>
</evidence>
<evidence type="ECO:0007744" key="15">
    <source>
    </source>
</evidence>
<evidence type="ECO:0007829" key="16">
    <source>
        <dbReference type="PDB" id="2NPS"/>
    </source>
</evidence>
<evidence type="ECO:0007829" key="17">
    <source>
        <dbReference type="PDB" id="4J2C"/>
    </source>
</evidence>
<protein>
    <recommendedName>
        <fullName>Syntaxin-6</fullName>
    </recommendedName>
</protein>
<keyword id="KW-0002">3D-structure</keyword>
<keyword id="KW-0007">Acetylation</keyword>
<keyword id="KW-0025">Alternative splicing</keyword>
<keyword id="KW-0175">Coiled coil</keyword>
<keyword id="KW-0967">Endosome</keyword>
<keyword id="KW-0333">Golgi apparatus</keyword>
<keyword id="KW-0472">Membrane</keyword>
<keyword id="KW-0597">Phosphoprotein</keyword>
<keyword id="KW-0653">Protein transport</keyword>
<keyword id="KW-1267">Proteomics identification</keyword>
<keyword id="KW-1185">Reference proteome</keyword>
<keyword id="KW-0812">Transmembrane</keyword>
<keyword id="KW-1133">Transmembrane helix</keyword>
<keyword id="KW-0813">Transport</keyword>
<sequence>MSMEDPFFVVKGEVQKAVNTAQGLFQRWTELLQDPSTATREEIDWTTNELRNNLRSIEWDLEDLDETISIVEANPRKFNLDATELSIRKAFITSTRQVVRDMKDQMSTSSVQALAERKNRQALLGDSGSQNWSTGTTDKYGRLDRELQRANSHFIEEQQAQQQLIVEQQDEQLELVSGSIGVLKNMSQRIGGELEEQAVMLEDFSHELESTQSRLDNVMKKLAKVSHMTSDRRQWCAIAILFAVLLVVLILFLVL</sequence>
<comment type="function">
    <text evidence="1">SNARE promoting movement of transport vesicles to target membranes. Targets endosomes to the trans-Golgi network, and may therefore function in retrograde trafficking. Together with SNARE STX12, promotes movement of vesicles from endosomes to the cell membrane, and may therefore function in the endocytic recycling pathway.</text>
</comment>
<comment type="subunit">
    <text evidence="1 2 5 6 7 8 9 10">Identified in a complex containing STX6, STX12, VAMP4 and VTI1A (PubMed:17159904). Binds EEA1 (By similarity). Interacts with VPS45A (By similarity). Interacts with MARCHF2; the interaction promotes MARCHF2-mediated ubiquitination and degradation of CFTR (PubMed:23818989). Interacts with MARCHF3 (By similarity). Interacts with GOPC (PubMed:11384996). Interacts with BLTP3B (via C-terminal coiled-coil domain) (PubMed:20163565, PubMed:35499567). Interacts with BAIAP3; this interaction is increased in the presence of calcium (PubMed:28626000). Interacts with VPS13B (By similarity).</text>
</comment>
<comment type="interaction">
    <interactant intactId="EBI-2695795">
        <id>O43752</id>
    </interactant>
    <interactant intactId="EBI-77613">
        <id>P05067</id>
        <label>APP</label>
    </interactant>
    <organismsDiffer>false</organismsDiffer>
    <experiments>3</experiments>
</comment>
<comment type="interaction">
    <interactant intactId="EBI-2695795">
        <id>O43752</id>
    </interactant>
    <interactant intactId="EBI-13059134">
        <id>Q13520</id>
        <label>AQP6</label>
    </interactant>
    <organismsDiffer>false</organismsDiffer>
    <experiments>3</experiments>
</comment>
<comment type="interaction">
    <interactant intactId="EBI-2695795">
        <id>O43752</id>
    </interactant>
    <interactant intactId="EBI-11942961">
        <id>Q8IUR7-6</id>
        <label>ARMC8</label>
    </interactant>
    <organismsDiffer>false</organismsDiffer>
    <experiments>3</experiments>
</comment>
<comment type="interaction">
    <interactant intactId="EBI-2695795">
        <id>O43752</id>
    </interactant>
    <interactant intactId="EBI-3915253">
        <id>Q15125</id>
        <label>EBP</label>
    </interactant>
    <organismsDiffer>false</organismsDiffer>
    <experiments>3</experiments>
</comment>
<comment type="interaction">
    <interactant intactId="EBI-2695795">
        <id>O43752</id>
    </interactant>
    <interactant intactId="EBI-297353">
        <id>P00533</id>
        <label>EGFR</label>
    </interactant>
    <organismsDiffer>false</organismsDiffer>
    <experiments>3</experiments>
</comment>
<comment type="interaction">
    <interactant intactId="EBI-2695795">
        <id>O43752</id>
    </interactant>
    <interactant intactId="EBI-18938272">
        <id>Q96KR6</id>
        <label>FAM210B</label>
    </interactant>
    <organismsDiffer>false</organismsDiffer>
    <experiments>3</experiments>
</comment>
<comment type="interaction">
    <interactant intactId="EBI-2695795">
        <id>O43752</id>
    </interactant>
    <interactant intactId="EBI-4401517">
        <id>O14653</id>
        <label>GOSR2</label>
    </interactant>
    <organismsDiffer>false</organismsDiffer>
    <experiments>5</experiments>
</comment>
<comment type="interaction">
    <interactant intactId="EBI-2695795">
        <id>O43752</id>
    </interactant>
    <interactant intactId="EBI-2830566">
        <id>Q9H400</id>
        <label>LIME1</label>
    </interactant>
    <organismsDiffer>false</organismsDiffer>
    <experiments>3</experiments>
</comment>
<comment type="interaction">
    <interactant intactId="EBI-2695795">
        <id>O43752</id>
    </interactant>
    <interactant intactId="EBI-16439278">
        <id>Q6FHY5</id>
        <label>MEOX2</label>
    </interactant>
    <organismsDiffer>false</organismsDiffer>
    <experiments>3</experiments>
</comment>
<comment type="interaction">
    <interactant intactId="EBI-2695795">
        <id>O43752</id>
    </interactant>
    <interactant intactId="EBI-6163737">
        <id>Q8N4V1</id>
        <label>MMGT1</label>
    </interactant>
    <organismsDiffer>false</organismsDiffer>
    <experiments>3</experiments>
</comment>
<comment type="interaction">
    <interactant intactId="EBI-2695795">
        <id>O43752</id>
    </interactant>
    <interactant intactId="EBI-17857560">
        <id>Q49AM1</id>
        <label>MTERF2</label>
    </interactant>
    <organismsDiffer>false</organismsDiffer>
    <experiments>3</experiments>
</comment>
<comment type="interaction">
    <interactant intactId="EBI-2695795">
        <id>O43752</id>
    </interactant>
    <interactant intactId="EBI-3923617">
        <id>Q9H2K0</id>
        <label>MTIF3</label>
    </interactant>
    <organismsDiffer>false</organismsDiffer>
    <experiments>3</experiments>
</comment>
<comment type="interaction">
    <interactant intactId="EBI-2695795">
        <id>O43752</id>
    </interactant>
    <interactant intactId="EBI-3921185">
        <id>Q9H115</id>
        <label>NAPB</label>
    </interactant>
    <organismsDiffer>false</organismsDiffer>
    <experiments>5</experiments>
</comment>
<comment type="interaction">
    <interactant intactId="EBI-2695795">
        <id>O43752</id>
    </interactant>
    <interactant intactId="EBI-348380">
        <id>P25788</id>
        <label>PSMA3</label>
    </interactant>
    <organismsDiffer>false</organismsDiffer>
    <experiments>3</experiments>
</comment>
<comment type="interaction">
    <interactant intactId="EBI-2695795">
        <id>O43752</id>
    </interactant>
    <interactant intactId="EBI-17247926">
        <id>Q9NY72</id>
        <label>SCN3B</label>
    </interactant>
    <organismsDiffer>false</organismsDiffer>
    <experiments>3</experiments>
</comment>
<comment type="interaction">
    <interactant intactId="EBI-2695795">
        <id>O43752</id>
    </interactant>
    <interactant intactId="EBI-490676">
        <id>O95721</id>
        <label>SNAP29</label>
    </interactant>
    <organismsDiffer>false</organismsDiffer>
    <experiments>4</experiments>
</comment>
<comment type="interaction">
    <interactant intactId="EBI-2695795">
        <id>O43752</id>
    </interactant>
    <interactant intactId="EBI-1211440">
        <id>P27105</id>
        <label>STOM</label>
    </interactant>
    <organismsDiffer>false</organismsDiffer>
    <experiments>3</experiments>
</comment>
<comment type="interaction">
    <interactant intactId="EBI-2695795">
        <id>O43752</id>
    </interactant>
    <interactant intactId="EBI-712466">
        <id>Q16623</id>
        <label>STX1A</label>
    </interactant>
    <organismsDiffer>false</organismsDiffer>
    <experiments>3</experiments>
</comment>
<comment type="interaction">
    <interactant intactId="EBI-2695795">
        <id>O43752</id>
    </interactant>
    <interactant intactId="EBI-11956649">
        <id>P32856-2</id>
        <label>STX2</label>
    </interactant>
    <organismsDiffer>false</organismsDiffer>
    <experiments>3</experiments>
</comment>
<comment type="interaction">
    <interactant intactId="EBI-2695795">
        <id>O43752</id>
    </interactant>
    <interactant intactId="EBI-744942">
        <id>Q12846</id>
        <label>STX4</label>
    </interactant>
    <organismsDiffer>false</organismsDiffer>
    <experiments>9</experiments>
</comment>
<comment type="interaction">
    <interactant intactId="EBI-2695795">
        <id>O43752</id>
    </interactant>
    <interactant intactId="EBI-6268651">
        <id>Q9NPL8</id>
        <label>TIMMDC1</label>
    </interactant>
    <organismsDiffer>false</organismsDiffer>
    <experiments>3</experiments>
</comment>
<comment type="interaction">
    <interactant intactId="EBI-2695795">
        <id>O43752</id>
    </interactant>
    <interactant intactId="EBI-8638294">
        <id>Q9NUH8</id>
        <label>TMEM14B</label>
    </interactant>
    <organismsDiffer>false</organismsDiffer>
    <experiments>3</experiments>
</comment>
<comment type="interaction">
    <interactant intactId="EBI-2695795">
        <id>O43752</id>
    </interactant>
    <interactant intactId="EBI-6269551">
        <id>Q6UW68</id>
        <label>TMEM205</label>
    </interactant>
    <organismsDiffer>false</organismsDiffer>
    <experiments>3</experiments>
</comment>
<comment type="interaction">
    <interactant intactId="EBI-2695795">
        <id>O43752</id>
    </interactant>
    <interactant intactId="EBI-2548832">
        <id>Q8N661</id>
        <label>TMEM86B</label>
    </interactant>
    <organismsDiffer>false</organismsDiffer>
    <experiments>3</experiments>
</comment>
<comment type="interaction">
    <interactant intactId="EBI-2695795">
        <id>O43752</id>
    </interactant>
    <interactant intactId="EBI-723976">
        <id>Q9P0T7</id>
        <label>TMEM9</label>
    </interactant>
    <organismsDiffer>false</organismsDiffer>
    <experiments>4</experiments>
</comment>
<comment type="interaction">
    <interactant intactId="EBI-2695795">
        <id>O43752</id>
    </interactant>
    <interactant intactId="EBI-744953">
        <id>O75379</id>
        <label>VAMP4</label>
    </interactant>
    <organismsDiffer>false</organismsDiffer>
    <experiments>4</experiments>
</comment>
<comment type="interaction">
    <interactant intactId="EBI-2695795">
        <id>O43752</id>
    </interactant>
    <interactant intactId="EBI-16067837">
        <id>Q9UID3-1</id>
        <label>VPS51</label>
    </interactant>
    <organismsDiffer>false</organismsDiffer>
    <experiments>8</experiments>
</comment>
<comment type="subcellular location">
    <subcellularLocation>
        <location evidence="8">Golgi apparatus membrane</location>
        <topology evidence="12">Single-pass type IV membrane protein</topology>
    </subcellularLocation>
    <subcellularLocation>
        <location evidence="1">Golgi apparatus</location>
        <location evidence="1">trans-Golgi network membrane</location>
        <topology evidence="3">Single-pass type IV membrane protein</topology>
    </subcellularLocation>
    <subcellularLocation>
        <location evidence="1">Recycling endosome membrane</location>
        <topology evidence="3">Single-pass type IV membrane protein</topology>
    </subcellularLocation>
</comment>
<comment type="alternative products">
    <event type="alternative splicing"/>
    <isoform>
        <id>O43752-1</id>
        <name>1</name>
        <sequence type="displayed"/>
    </isoform>
    <isoform>
        <id>O43752-2</id>
        <name>2</name>
        <sequence type="described" ref="VSP_054763"/>
    </isoform>
</comment>
<comment type="similarity">
    <text evidence="12">Belongs to the syntaxin family.</text>
</comment>
<accession>O43752</accession>
<accession>B2R652</accession>
<accession>B4DR17</accession>
<accession>Q5VY08</accession>
<accession>Q6FH83</accession>